<comment type="catalytic activity">
    <reaction evidence="1">
        <text>tRNA(Lys) + L-lysine + ATP = L-lysyl-tRNA(Lys) + AMP + diphosphate</text>
        <dbReference type="Rhea" id="RHEA:20792"/>
        <dbReference type="Rhea" id="RHEA-COMP:9696"/>
        <dbReference type="Rhea" id="RHEA-COMP:9697"/>
        <dbReference type="ChEBI" id="CHEBI:30616"/>
        <dbReference type="ChEBI" id="CHEBI:32551"/>
        <dbReference type="ChEBI" id="CHEBI:33019"/>
        <dbReference type="ChEBI" id="CHEBI:78442"/>
        <dbReference type="ChEBI" id="CHEBI:78529"/>
        <dbReference type="ChEBI" id="CHEBI:456215"/>
        <dbReference type="EC" id="6.1.1.6"/>
    </reaction>
</comment>
<comment type="cofactor">
    <cofactor evidence="1">
        <name>Mg(2+)</name>
        <dbReference type="ChEBI" id="CHEBI:18420"/>
    </cofactor>
    <text evidence="1">Binds 3 Mg(2+) ions per subunit.</text>
</comment>
<comment type="subunit">
    <text evidence="1">Homodimer.</text>
</comment>
<comment type="subcellular location">
    <subcellularLocation>
        <location evidence="1">Cytoplasm</location>
    </subcellularLocation>
</comment>
<comment type="similarity">
    <text evidence="1">Belongs to the class-II aminoacyl-tRNA synthetase family.</text>
</comment>
<gene>
    <name evidence="1" type="primary">lysS</name>
    <name type="ordered locus">BCI_0152</name>
</gene>
<evidence type="ECO:0000255" key="1">
    <source>
        <dbReference type="HAMAP-Rule" id="MF_00252"/>
    </source>
</evidence>
<keyword id="KW-0030">Aminoacyl-tRNA synthetase</keyword>
<keyword id="KW-0067">ATP-binding</keyword>
<keyword id="KW-0963">Cytoplasm</keyword>
<keyword id="KW-0436">Ligase</keyword>
<keyword id="KW-0460">Magnesium</keyword>
<keyword id="KW-0479">Metal-binding</keyword>
<keyword id="KW-0547">Nucleotide-binding</keyword>
<keyword id="KW-0648">Protein biosynthesis</keyword>
<keyword id="KW-1185">Reference proteome</keyword>
<reference key="1">
    <citation type="journal article" date="2006" name="PLoS Biol.">
        <title>Metabolic complementarity and genomics of the dual bacterial symbiosis of sharpshooters.</title>
        <authorList>
            <person name="Wu D."/>
            <person name="Daugherty S.C."/>
            <person name="Van Aken S.E."/>
            <person name="Pai G.H."/>
            <person name="Watkins K.L."/>
            <person name="Khouri H."/>
            <person name="Tallon L.J."/>
            <person name="Zaborsky J.M."/>
            <person name="Dunbar H.E."/>
            <person name="Tran P.L."/>
            <person name="Moran N.A."/>
            <person name="Eisen J.A."/>
        </authorList>
    </citation>
    <scope>NUCLEOTIDE SEQUENCE [LARGE SCALE GENOMIC DNA]</scope>
</reference>
<name>SYK_BAUCH</name>
<proteinExistence type="inferred from homology"/>
<accession>Q1LTU4</accession>
<feature type="chain" id="PRO_1000078494" description="Lysine--tRNA ligase">
    <location>
        <begin position="1"/>
        <end position="506"/>
    </location>
</feature>
<feature type="binding site" evidence="1">
    <location>
        <position position="416"/>
    </location>
    <ligand>
        <name>Mg(2+)</name>
        <dbReference type="ChEBI" id="CHEBI:18420"/>
        <label>1</label>
    </ligand>
</feature>
<feature type="binding site" evidence="1">
    <location>
        <position position="423"/>
    </location>
    <ligand>
        <name>Mg(2+)</name>
        <dbReference type="ChEBI" id="CHEBI:18420"/>
        <label>1</label>
    </ligand>
</feature>
<feature type="binding site" evidence="1">
    <location>
        <position position="423"/>
    </location>
    <ligand>
        <name>Mg(2+)</name>
        <dbReference type="ChEBI" id="CHEBI:18420"/>
        <label>2</label>
    </ligand>
</feature>
<protein>
    <recommendedName>
        <fullName evidence="1">Lysine--tRNA ligase</fullName>
        <ecNumber evidence="1">6.1.1.6</ecNumber>
    </recommendedName>
    <alternativeName>
        <fullName evidence="1">Lysyl-tRNA synthetase</fullName>
        <shortName evidence="1">LysRS</shortName>
    </alternativeName>
</protein>
<organism>
    <name type="scientific">Baumannia cicadellinicola subsp. Homalodisca coagulata</name>
    <dbReference type="NCBI Taxonomy" id="374463"/>
    <lineage>
        <taxon>Bacteria</taxon>
        <taxon>Pseudomonadati</taxon>
        <taxon>Pseudomonadota</taxon>
        <taxon>Gammaproteobacteria</taxon>
        <taxon>Candidatus Palibaumannia</taxon>
    </lineage>
</organism>
<dbReference type="EC" id="6.1.1.6" evidence="1"/>
<dbReference type="EMBL" id="CP000238">
    <property type="protein sequence ID" value="ABF14108.1"/>
    <property type="molecule type" value="Genomic_DNA"/>
</dbReference>
<dbReference type="RefSeq" id="WP_011520353.1">
    <property type="nucleotide sequence ID" value="NC_007984.1"/>
</dbReference>
<dbReference type="SMR" id="Q1LTU4"/>
<dbReference type="STRING" id="374463.BCI_0152"/>
<dbReference type="KEGG" id="bci:BCI_0152"/>
<dbReference type="HOGENOM" id="CLU_008255_6_0_6"/>
<dbReference type="OrthoDB" id="9801152at2"/>
<dbReference type="Proteomes" id="UP000002427">
    <property type="component" value="Chromosome"/>
</dbReference>
<dbReference type="GO" id="GO:0005829">
    <property type="term" value="C:cytosol"/>
    <property type="evidence" value="ECO:0007669"/>
    <property type="project" value="TreeGrafter"/>
</dbReference>
<dbReference type="GO" id="GO:0005524">
    <property type="term" value="F:ATP binding"/>
    <property type="evidence" value="ECO:0007669"/>
    <property type="project" value="UniProtKB-UniRule"/>
</dbReference>
<dbReference type="GO" id="GO:0004824">
    <property type="term" value="F:lysine-tRNA ligase activity"/>
    <property type="evidence" value="ECO:0007669"/>
    <property type="project" value="UniProtKB-UniRule"/>
</dbReference>
<dbReference type="GO" id="GO:0000287">
    <property type="term" value="F:magnesium ion binding"/>
    <property type="evidence" value="ECO:0007669"/>
    <property type="project" value="UniProtKB-UniRule"/>
</dbReference>
<dbReference type="GO" id="GO:0000049">
    <property type="term" value="F:tRNA binding"/>
    <property type="evidence" value="ECO:0007669"/>
    <property type="project" value="TreeGrafter"/>
</dbReference>
<dbReference type="GO" id="GO:0006430">
    <property type="term" value="P:lysyl-tRNA aminoacylation"/>
    <property type="evidence" value="ECO:0007669"/>
    <property type="project" value="UniProtKB-UniRule"/>
</dbReference>
<dbReference type="CDD" id="cd00775">
    <property type="entry name" value="LysRS_core"/>
    <property type="match status" value="1"/>
</dbReference>
<dbReference type="CDD" id="cd04322">
    <property type="entry name" value="LysRS_N"/>
    <property type="match status" value="1"/>
</dbReference>
<dbReference type="FunFam" id="2.40.50.140:FF:000024">
    <property type="entry name" value="Lysine--tRNA ligase"/>
    <property type="match status" value="1"/>
</dbReference>
<dbReference type="FunFam" id="3.30.930.10:FF:000001">
    <property type="entry name" value="Lysine--tRNA ligase"/>
    <property type="match status" value="1"/>
</dbReference>
<dbReference type="Gene3D" id="3.30.930.10">
    <property type="entry name" value="Bira Bifunctional Protein, Domain 2"/>
    <property type="match status" value="1"/>
</dbReference>
<dbReference type="Gene3D" id="2.40.50.140">
    <property type="entry name" value="Nucleic acid-binding proteins"/>
    <property type="match status" value="1"/>
</dbReference>
<dbReference type="HAMAP" id="MF_00252">
    <property type="entry name" value="Lys_tRNA_synth_class2"/>
    <property type="match status" value="1"/>
</dbReference>
<dbReference type="InterPro" id="IPR004364">
    <property type="entry name" value="Aa-tRNA-synt_II"/>
</dbReference>
<dbReference type="InterPro" id="IPR006195">
    <property type="entry name" value="aa-tRNA-synth_II"/>
</dbReference>
<dbReference type="InterPro" id="IPR045864">
    <property type="entry name" value="aa-tRNA-synth_II/BPL/LPL"/>
</dbReference>
<dbReference type="InterPro" id="IPR002313">
    <property type="entry name" value="Lys-tRNA-ligase_II"/>
</dbReference>
<dbReference type="InterPro" id="IPR044136">
    <property type="entry name" value="Lys-tRNA-ligase_II_N"/>
</dbReference>
<dbReference type="InterPro" id="IPR018149">
    <property type="entry name" value="Lys-tRNA-synth_II_C"/>
</dbReference>
<dbReference type="InterPro" id="IPR012340">
    <property type="entry name" value="NA-bd_OB-fold"/>
</dbReference>
<dbReference type="InterPro" id="IPR004365">
    <property type="entry name" value="NA-bd_OB_tRNA"/>
</dbReference>
<dbReference type="NCBIfam" id="TIGR00499">
    <property type="entry name" value="lysS_bact"/>
    <property type="match status" value="1"/>
</dbReference>
<dbReference type="NCBIfam" id="NF001756">
    <property type="entry name" value="PRK00484.1"/>
    <property type="match status" value="1"/>
</dbReference>
<dbReference type="PANTHER" id="PTHR42918:SF15">
    <property type="entry name" value="LYSINE--TRNA LIGASE, CHLOROPLASTIC_MITOCHONDRIAL"/>
    <property type="match status" value="1"/>
</dbReference>
<dbReference type="PANTHER" id="PTHR42918">
    <property type="entry name" value="LYSYL-TRNA SYNTHETASE"/>
    <property type="match status" value="1"/>
</dbReference>
<dbReference type="Pfam" id="PF00152">
    <property type="entry name" value="tRNA-synt_2"/>
    <property type="match status" value="1"/>
</dbReference>
<dbReference type="Pfam" id="PF01336">
    <property type="entry name" value="tRNA_anti-codon"/>
    <property type="match status" value="1"/>
</dbReference>
<dbReference type="PRINTS" id="PR00982">
    <property type="entry name" value="TRNASYNTHLYS"/>
</dbReference>
<dbReference type="SUPFAM" id="SSF55681">
    <property type="entry name" value="Class II aaRS and biotin synthetases"/>
    <property type="match status" value="1"/>
</dbReference>
<dbReference type="SUPFAM" id="SSF50249">
    <property type="entry name" value="Nucleic acid-binding proteins"/>
    <property type="match status" value="1"/>
</dbReference>
<dbReference type="PROSITE" id="PS50862">
    <property type="entry name" value="AA_TRNA_LIGASE_II"/>
    <property type="match status" value="1"/>
</dbReference>
<sequence length="506" mass="58666">MCKLNIFDPVQNYENLNQQLNLRRNKLNNLRKQGKTFTNNFKRNVISNQLFLQYGEKNNETLKTLNIQVSLAGRMINRRIMGKASFVILQDSGGTIQLYLSSKNLSDSFYNEHFKKWDLGDILGVHGRLFKTKTGELTINCNEIILLTKALRPIPNKFHGIVDKQIRYRQRYLDLITNKNSFNLFKTRSQIITEIRQFLNKEDFIEVETPILQSLPGGATARPFITYHNALDMNLYLRIAPELYLKQLIIGGFEKIFEINRNFRNEGLSAHHNPEFTMMELYIAYADYHDVMLLTQNLLNTITNHVLGTNIIQYGNLKLDFSKNFVKMTMKEAICHYNKQILSKHLDDKMQAITCAKNIGIHIDQKWGLGRIQTEIFEKTTEKHLLQPTFITSYPIEVSPLARRNDNNPFFADRFELFIGGYEIGNGFSELNDYEDQANRLIEQATIKNSGDNESMFYDEDYIIALEHGLPPTAGLGIGIDRLVMLLTNSHFIRDVILFPTMRLKI</sequence>